<protein>
    <recommendedName>
        <fullName evidence="1">Peptidyl-tRNA hydrolase</fullName>
        <shortName evidence="1">Pth</shortName>
        <ecNumber evidence="1">3.1.1.29</ecNumber>
    </recommendedName>
</protein>
<feature type="chain" id="PRO_0000187840" description="Peptidyl-tRNA hydrolase">
    <location>
        <begin position="1"/>
        <end position="194"/>
    </location>
</feature>
<feature type="active site" description="Proton acceptor" evidence="1">
    <location>
        <position position="21"/>
    </location>
</feature>
<feature type="binding site" evidence="1">
    <location>
        <position position="16"/>
    </location>
    <ligand>
        <name>tRNA</name>
        <dbReference type="ChEBI" id="CHEBI:17843"/>
    </ligand>
</feature>
<feature type="binding site" evidence="1">
    <location>
        <position position="67"/>
    </location>
    <ligand>
        <name>tRNA</name>
        <dbReference type="ChEBI" id="CHEBI:17843"/>
    </ligand>
</feature>
<feature type="binding site" evidence="1">
    <location>
        <position position="69"/>
    </location>
    <ligand>
        <name>tRNA</name>
        <dbReference type="ChEBI" id="CHEBI:17843"/>
    </ligand>
</feature>
<feature type="binding site" evidence="1">
    <location>
        <position position="115"/>
    </location>
    <ligand>
        <name>tRNA</name>
        <dbReference type="ChEBI" id="CHEBI:17843"/>
    </ligand>
</feature>
<feature type="site" description="Discriminates between blocked and unblocked aminoacyl-tRNA" evidence="1">
    <location>
        <position position="11"/>
    </location>
</feature>
<feature type="site" description="Stabilizes the basic form of H active site to accept a proton" evidence="1">
    <location>
        <position position="94"/>
    </location>
</feature>
<evidence type="ECO:0000255" key="1">
    <source>
        <dbReference type="HAMAP-Rule" id="MF_00083"/>
    </source>
</evidence>
<keyword id="KW-0963">Cytoplasm</keyword>
<keyword id="KW-0378">Hydrolase</keyword>
<keyword id="KW-1185">Reference proteome</keyword>
<keyword id="KW-0694">RNA-binding</keyword>
<keyword id="KW-0820">tRNA-binding</keyword>
<accession>Q59989</accession>
<comment type="function">
    <text evidence="1">Hydrolyzes ribosome-free peptidyl-tRNAs (with 1 or more amino acids incorporated), which drop off the ribosome during protein synthesis, or as a result of ribosome stalling.</text>
</comment>
<comment type="function">
    <text evidence="1">Catalyzes the release of premature peptidyl moieties from peptidyl-tRNA molecules trapped in stalled 50S ribosomal subunits, and thus maintains levels of free tRNAs and 50S ribosomes.</text>
</comment>
<comment type="catalytic activity">
    <reaction evidence="1">
        <text>an N-acyl-L-alpha-aminoacyl-tRNA + H2O = an N-acyl-L-amino acid + a tRNA + H(+)</text>
        <dbReference type="Rhea" id="RHEA:54448"/>
        <dbReference type="Rhea" id="RHEA-COMP:10123"/>
        <dbReference type="Rhea" id="RHEA-COMP:13883"/>
        <dbReference type="ChEBI" id="CHEBI:15377"/>
        <dbReference type="ChEBI" id="CHEBI:15378"/>
        <dbReference type="ChEBI" id="CHEBI:59874"/>
        <dbReference type="ChEBI" id="CHEBI:78442"/>
        <dbReference type="ChEBI" id="CHEBI:138191"/>
        <dbReference type="EC" id="3.1.1.29"/>
    </reaction>
</comment>
<comment type="subunit">
    <text evidence="1">Monomer.</text>
</comment>
<comment type="subcellular location">
    <subcellularLocation>
        <location evidence="1">Cytoplasm</location>
    </subcellularLocation>
</comment>
<comment type="similarity">
    <text evidence="1">Belongs to the PTH family.</text>
</comment>
<gene>
    <name evidence="1" type="primary">pth</name>
    <name type="ordered locus">slr0922</name>
</gene>
<name>PTH_SYNY3</name>
<organism>
    <name type="scientific">Synechocystis sp. (strain ATCC 27184 / PCC 6803 / Kazusa)</name>
    <dbReference type="NCBI Taxonomy" id="1111708"/>
    <lineage>
        <taxon>Bacteria</taxon>
        <taxon>Bacillati</taxon>
        <taxon>Cyanobacteriota</taxon>
        <taxon>Cyanophyceae</taxon>
        <taxon>Synechococcales</taxon>
        <taxon>Merismopediaceae</taxon>
        <taxon>Synechocystis</taxon>
    </lineage>
</organism>
<sequence length="194" mass="21524">MIPKLIVGLGNPEPKYDQTRHNIGFAVVDALAITWQCSWYDHKRFQGWFGEGLMAGQKTCLLKPRTYMNRSGQAVRAVVDWYKLDPQSVLVVYDDMDLPLGRLRLRQTGSAGGHNGMKSLISHLGTQDFPRLRLGIGKSDGSKDTIAHVLGKFSPSELPIVEKSLDLATEAIAHSLHHGIAKTMSLFNNRDVCP</sequence>
<dbReference type="EC" id="3.1.1.29" evidence="1"/>
<dbReference type="EMBL" id="BA000022">
    <property type="protein sequence ID" value="BAA10473.1"/>
    <property type="molecule type" value="Genomic_DNA"/>
</dbReference>
<dbReference type="PIR" id="S75738">
    <property type="entry name" value="S75738"/>
</dbReference>
<dbReference type="SMR" id="Q59989"/>
<dbReference type="FunCoup" id="Q59989">
    <property type="interactions" value="425"/>
</dbReference>
<dbReference type="IntAct" id="Q59989">
    <property type="interactions" value="2"/>
</dbReference>
<dbReference type="STRING" id="1148.gene:10499976"/>
<dbReference type="PaxDb" id="1148-1001232"/>
<dbReference type="EnsemblBacteria" id="BAA10473">
    <property type="protein sequence ID" value="BAA10473"/>
    <property type="gene ID" value="BAA10473"/>
</dbReference>
<dbReference type="KEGG" id="syn:slr0922"/>
<dbReference type="eggNOG" id="COG0193">
    <property type="taxonomic scope" value="Bacteria"/>
</dbReference>
<dbReference type="InParanoid" id="Q59989"/>
<dbReference type="PhylomeDB" id="Q59989"/>
<dbReference type="Proteomes" id="UP000001425">
    <property type="component" value="Chromosome"/>
</dbReference>
<dbReference type="GO" id="GO:0005737">
    <property type="term" value="C:cytoplasm"/>
    <property type="evidence" value="ECO:0007669"/>
    <property type="project" value="UniProtKB-SubCell"/>
</dbReference>
<dbReference type="GO" id="GO:0004045">
    <property type="term" value="F:peptidyl-tRNA hydrolase activity"/>
    <property type="evidence" value="ECO:0000318"/>
    <property type="project" value="GO_Central"/>
</dbReference>
<dbReference type="GO" id="GO:0000049">
    <property type="term" value="F:tRNA binding"/>
    <property type="evidence" value="ECO:0007669"/>
    <property type="project" value="UniProtKB-UniRule"/>
</dbReference>
<dbReference type="GO" id="GO:0006515">
    <property type="term" value="P:protein quality control for misfolded or incompletely synthesized proteins"/>
    <property type="evidence" value="ECO:0007669"/>
    <property type="project" value="UniProtKB-UniRule"/>
</dbReference>
<dbReference type="GO" id="GO:0072344">
    <property type="term" value="P:rescue of stalled ribosome"/>
    <property type="evidence" value="ECO:0007669"/>
    <property type="project" value="UniProtKB-UniRule"/>
</dbReference>
<dbReference type="CDD" id="cd00462">
    <property type="entry name" value="PTH"/>
    <property type="match status" value="1"/>
</dbReference>
<dbReference type="FunFam" id="3.40.50.1470:FF:000001">
    <property type="entry name" value="Peptidyl-tRNA hydrolase"/>
    <property type="match status" value="1"/>
</dbReference>
<dbReference type="Gene3D" id="3.40.50.1470">
    <property type="entry name" value="Peptidyl-tRNA hydrolase"/>
    <property type="match status" value="1"/>
</dbReference>
<dbReference type="HAMAP" id="MF_00083">
    <property type="entry name" value="Pept_tRNA_hydro_bact"/>
    <property type="match status" value="1"/>
</dbReference>
<dbReference type="InterPro" id="IPR001328">
    <property type="entry name" value="Pept_tRNA_hydro"/>
</dbReference>
<dbReference type="InterPro" id="IPR018171">
    <property type="entry name" value="Pept_tRNA_hydro_CS"/>
</dbReference>
<dbReference type="InterPro" id="IPR036416">
    <property type="entry name" value="Pept_tRNA_hydro_sf"/>
</dbReference>
<dbReference type="NCBIfam" id="TIGR00447">
    <property type="entry name" value="pth"/>
    <property type="match status" value="1"/>
</dbReference>
<dbReference type="PANTHER" id="PTHR17224">
    <property type="entry name" value="PEPTIDYL-TRNA HYDROLASE"/>
    <property type="match status" value="1"/>
</dbReference>
<dbReference type="PANTHER" id="PTHR17224:SF1">
    <property type="entry name" value="PEPTIDYL-TRNA HYDROLASE"/>
    <property type="match status" value="1"/>
</dbReference>
<dbReference type="Pfam" id="PF01195">
    <property type="entry name" value="Pept_tRNA_hydro"/>
    <property type="match status" value="1"/>
</dbReference>
<dbReference type="SUPFAM" id="SSF53178">
    <property type="entry name" value="Peptidyl-tRNA hydrolase-like"/>
    <property type="match status" value="1"/>
</dbReference>
<dbReference type="PROSITE" id="PS01195">
    <property type="entry name" value="PEPT_TRNA_HYDROL_1"/>
    <property type="match status" value="1"/>
</dbReference>
<dbReference type="PROSITE" id="PS01196">
    <property type="entry name" value="PEPT_TRNA_HYDROL_2"/>
    <property type="match status" value="1"/>
</dbReference>
<reference key="1">
    <citation type="journal article" date="1995" name="DNA Res.">
        <title>Sequence analysis of the genome of the unicellular cyanobacterium Synechocystis sp. strain PCC6803. I. Sequence features in the 1 Mb region from map positions 64% to 92% of the genome.</title>
        <authorList>
            <person name="Kaneko T."/>
            <person name="Tanaka A."/>
            <person name="Sato S."/>
            <person name="Kotani H."/>
            <person name="Sazuka T."/>
            <person name="Miyajima N."/>
            <person name="Sugiura M."/>
            <person name="Tabata S."/>
        </authorList>
    </citation>
    <scope>NUCLEOTIDE SEQUENCE [LARGE SCALE GENOMIC DNA]</scope>
    <source>
        <strain>ATCC 27184 / PCC 6803 / N-1</strain>
    </source>
</reference>
<reference key="2">
    <citation type="journal article" date="1996" name="DNA Res.">
        <title>Sequence analysis of the genome of the unicellular cyanobacterium Synechocystis sp. strain PCC6803. II. Sequence determination of the entire genome and assignment of potential protein-coding regions.</title>
        <authorList>
            <person name="Kaneko T."/>
            <person name="Sato S."/>
            <person name="Kotani H."/>
            <person name="Tanaka A."/>
            <person name="Asamizu E."/>
            <person name="Nakamura Y."/>
            <person name="Miyajima N."/>
            <person name="Hirosawa M."/>
            <person name="Sugiura M."/>
            <person name="Sasamoto S."/>
            <person name="Kimura T."/>
            <person name="Hosouchi T."/>
            <person name="Matsuno A."/>
            <person name="Muraki A."/>
            <person name="Nakazaki N."/>
            <person name="Naruo K."/>
            <person name="Okumura S."/>
            <person name="Shimpo S."/>
            <person name="Takeuchi C."/>
            <person name="Wada T."/>
            <person name="Watanabe A."/>
            <person name="Yamada M."/>
            <person name="Yasuda M."/>
            <person name="Tabata S."/>
        </authorList>
    </citation>
    <scope>NUCLEOTIDE SEQUENCE [LARGE SCALE GENOMIC DNA]</scope>
    <source>
        <strain>ATCC 27184 / PCC 6803 / Kazusa</strain>
    </source>
</reference>
<proteinExistence type="inferred from homology"/>